<protein>
    <recommendedName>
        <fullName>Uncharacterized protein F54F2.9</fullName>
    </recommendedName>
</protein>
<name>YMA9_CAEEL</name>
<dbReference type="EMBL" id="FO081385">
    <property type="protein sequence ID" value="CCD71243.1"/>
    <property type="molecule type" value="Genomic_DNA"/>
</dbReference>
<dbReference type="PIR" id="S44823">
    <property type="entry name" value="S44823"/>
</dbReference>
<dbReference type="RefSeq" id="NP_498949.2">
    <property type="nucleotide sequence ID" value="NM_066548.8"/>
</dbReference>
<dbReference type="SMR" id="P34454"/>
<dbReference type="BioGRID" id="41443">
    <property type="interactions" value="3"/>
</dbReference>
<dbReference type="FunCoup" id="P34454">
    <property type="interactions" value="1970"/>
</dbReference>
<dbReference type="STRING" id="6239.F54F2.9.1"/>
<dbReference type="PaxDb" id="6239-F54F2.9"/>
<dbReference type="PeptideAtlas" id="P34454"/>
<dbReference type="EnsemblMetazoa" id="F54F2.9.1">
    <property type="protein sequence ID" value="F54F2.9.1"/>
    <property type="gene ID" value="WBGene00018836"/>
</dbReference>
<dbReference type="GeneID" id="176241"/>
<dbReference type="KEGG" id="cel:CELE_F54F2.9"/>
<dbReference type="UCSC" id="F54F2.9">
    <property type="organism name" value="c. elegans"/>
</dbReference>
<dbReference type="AGR" id="WB:WBGene00018836"/>
<dbReference type="CTD" id="176241"/>
<dbReference type="WormBase" id="F54F2.9">
    <property type="protein sequence ID" value="CE39158"/>
    <property type="gene ID" value="WBGene00018836"/>
</dbReference>
<dbReference type="eggNOG" id="KOG0724">
    <property type="taxonomic scope" value="Eukaryota"/>
</dbReference>
<dbReference type="HOGENOM" id="CLU_036945_2_0_1"/>
<dbReference type="InParanoid" id="P34454"/>
<dbReference type="OMA" id="AAYWERK"/>
<dbReference type="OrthoDB" id="10250354at2759"/>
<dbReference type="PhylomeDB" id="P34454"/>
<dbReference type="PRO" id="PR:P34454"/>
<dbReference type="Proteomes" id="UP000001940">
    <property type="component" value="Chromosome III"/>
</dbReference>
<dbReference type="Bgee" id="WBGene00018836">
    <property type="expression patterns" value="Expressed in adult organism and 4 other cell types or tissues"/>
</dbReference>
<dbReference type="GO" id="GO:0012505">
    <property type="term" value="C:endomembrane system"/>
    <property type="evidence" value="ECO:0000318"/>
    <property type="project" value="GO_Central"/>
</dbReference>
<dbReference type="GO" id="GO:0031965">
    <property type="term" value="C:nuclear membrane"/>
    <property type="evidence" value="ECO:0007669"/>
    <property type="project" value="UniProtKB-SubCell"/>
</dbReference>
<dbReference type="GO" id="GO:0003677">
    <property type="term" value="F:DNA binding"/>
    <property type="evidence" value="ECO:0007669"/>
    <property type="project" value="UniProtKB-KW"/>
</dbReference>
<dbReference type="CDD" id="cd06257">
    <property type="entry name" value="DnaJ"/>
    <property type="match status" value="1"/>
</dbReference>
<dbReference type="CDD" id="cd00167">
    <property type="entry name" value="SANT"/>
    <property type="match status" value="1"/>
</dbReference>
<dbReference type="Gene3D" id="1.10.287.110">
    <property type="entry name" value="DnaJ domain"/>
    <property type="match status" value="1"/>
</dbReference>
<dbReference type="Gene3D" id="1.10.10.60">
    <property type="entry name" value="Homeodomain-like"/>
    <property type="match status" value="2"/>
</dbReference>
<dbReference type="InterPro" id="IPR001623">
    <property type="entry name" value="DnaJ_domain"/>
</dbReference>
<dbReference type="InterPro" id="IPR052606">
    <property type="entry name" value="DnaJ_domain_protein"/>
</dbReference>
<dbReference type="InterPro" id="IPR009057">
    <property type="entry name" value="Homeodomain-like_sf"/>
</dbReference>
<dbReference type="InterPro" id="IPR036869">
    <property type="entry name" value="J_dom_sf"/>
</dbReference>
<dbReference type="InterPro" id="IPR001005">
    <property type="entry name" value="SANT/Myb"/>
</dbReference>
<dbReference type="InterPro" id="IPR017884">
    <property type="entry name" value="SANT_dom"/>
</dbReference>
<dbReference type="PANTHER" id="PTHR44653">
    <property type="entry name" value="DNAJ HOMOLOG SUBFAMILY C MEMBER 1"/>
    <property type="match status" value="1"/>
</dbReference>
<dbReference type="PANTHER" id="PTHR44653:SF2">
    <property type="entry name" value="DNAJ HOMOLOG SUBFAMILY C MEMBER 1"/>
    <property type="match status" value="1"/>
</dbReference>
<dbReference type="Pfam" id="PF00226">
    <property type="entry name" value="DnaJ"/>
    <property type="match status" value="1"/>
</dbReference>
<dbReference type="Pfam" id="PF00249">
    <property type="entry name" value="Myb_DNA-binding"/>
    <property type="match status" value="1"/>
</dbReference>
<dbReference type="PRINTS" id="PR00625">
    <property type="entry name" value="JDOMAIN"/>
</dbReference>
<dbReference type="SMART" id="SM00271">
    <property type="entry name" value="DnaJ"/>
    <property type="match status" value="1"/>
</dbReference>
<dbReference type="SMART" id="SM00717">
    <property type="entry name" value="SANT"/>
    <property type="match status" value="2"/>
</dbReference>
<dbReference type="SUPFAM" id="SSF46565">
    <property type="entry name" value="Chaperone J-domain"/>
    <property type="match status" value="1"/>
</dbReference>
<dbReference type="SUPFAM" id="SSF46689">
    <property type="entry name" value="Homeodomain-like"/>
    <property type="match status" value="1"/>
</dbReference>
<dbReference type="PROSITE" id="PS50076">
    <property type="entry name" value="DNAJ_2"/>
    <property type="match status" value="1"/>
</dbReference>
<dbReference type="PROSITE" id="PS50090">
    <property type="entry name" value="MYB_LIKE"/>
    <property type="match status" value="2"/>
</dbReference>
<dbReference type="PROSITE" id="PS51293">
    <property type="entry name" value="SANT"/>
    <property type="match status" value="1"/>
</dbReference>
<accession>P34454</accession>
<evidence type="ECO:0000255" key="1"/>
<evidence type="ECO:0000255" key="2">
    <source>
        <dbReference type="PROSITE-ProRule" id="PRU00133"/>
    </source>
</evidence>
<evidence type="ECO:0000255" key="3">
    <source>
        <dbReference type="PROSITE-ProRule" id="PRU00286"/>
    </source>
</evidence>
<evidence type="ECO:0000255" key="4">
    <source>
        <dbReference type="PROSITE-ProRule" id="PRU00624"/>
    </source>
</evidence>
<evidence type="ECO:0000256" key="5">
    <source>
        <dbReference type="SAM" id="MobiDB-lite"/>
    </source>
</evidence>
<evidence type="ECO:0000305" key="6"/>
<proteinExistence type="inferred from homology"/>
<comment type="subcellular location">
    <subcellularLocation>
        <location evidence="4">Nucleus membrane</location>
        <topology evidence="6">Single-pass membrane protein</topology>
    </subcellularLocation>
</comment>
<sequence>MRVILLLAFLISLTECQWTSEDLALYDLVEEVGVNFYEWFDIPRDASSNQVKKAYRKLTLEWHPDRNSAPDATEKFRQVAGIYEVLKTTELREKYDNVLENGLPSWRHPMYYYRRMRKLAWYEGILVLLFIGTIAHYLMMWAAYFEKTLVYKQNVKKSRKSKKEDPAEAEKLMKQALEEYLPKYSELLPIILARGTVTLFKNLALTAKDAMTPKEVEPEEPTEEELAQQRRQQRAAAAPQQLEFKFEVAQGMKAVSTNDPEMEKKYAAENEVVAQKQSGATWTPDELASLVRLSTEKYPAGTPNRWEQMGRVLNRSAEDVIAMAGKMKQMKQEDYTKLLMTTIQQSVPVEEKSEDDWSQAEQKAFETALQKYPKGTDERWERISEEIGSKTKKQVMVRFKQLAEMIRKKKTNDT</sequence>
<gene>
    <name type="ORF">F54F2.9</name>
</gene>
<organism>
    <name type="scientific">Caenorhabditis elegans</name>
    <dbReference type="NCBI Taxonomy" id="6239"/>
    <lineage>
        <taxon>Eukaryota</taxon>
        <taxon>Metazoa</taxon>
        <taxon>Ecdysozoa</taxon>
        <taxon>Nematoda</taxon>
        <taxon>Chromadorea</taxon>
        <taxon>Rhabditida</taxon>
        <taxon>Rhabditina</taxon>
        <taxon>Rhabditomorpha</taxon>
        <taxon>Rhabditoidea</taxon>
        <taxon>Rhabditidae</taxon>
        <taxon>Peloderinae</taxon>
        <taxon>Caenorhabditis</taxon>
    </lineage>
</organism>
<reference key="1">
    <citation type="journal article" date="1994" name="Nature">
        <title>2.2 Mb of contiguous nucleotide sequence from chromosome III of C. elegans.</title>
        <authorList>
            <person name="Wilson R."/>
            <person name="Ainscough R."/>
            <person name="Anderson K."/>
            <person name="Baynes C."/>
            <person name="Berks M."/>
            <person name="Bonfield J."/>
            <person name="Burton J."/>
            <person name="Connell M."/>
            <person name="Copsey T."/>
            <person name="Cooper J."/>
            <person name="Coulson A."/>
            <person name="Craxton M."/>
            <person name="Dear S."/>
            <person name="Du Z."/>
            <person name="Durbin R."/>
            <person name="Favello A."/>
            <person name="Fraser A."/>
            <person name="Fulton L."/>
            <person name="Gardner A."/>
            <person name="Green P."/>
            <person name="Hawkins T."/>
            <person name="Hillier L."/>
            <person name="Jier M."/>
            <person name="Johnston L."/>
            <person name="Jones M."/>
            <person name="Kershaw J."/>
            <person name="Kirsten J."/>
            <person name="Laisster N."/>
            <person name="Latreille P."/>
            <person name="Lightning J."/>
            <person name="Lloyd C."/>
            <person name="Mortimore B."/>
            <person name="O'Callaghan M."/>
            <person name="Parsons J."/>
            <person name="Percy C."/>
            <person name="Rifken L."/>
            <person name="Roopra A."/>
            <person name="Saunders D."/>
            <person name="Shownkeen R."/>
            <person name="Sims M."/>
            <person name="Smaldon N."/>
            <person name="Smith A."/>
            <person name="Smith M."/>
            <person name="Sonnhammer E."/>
            <person name="Staden R."/>
            <person name="Sulston J."/>
            <person name="Thierry-Mieg J."/>
            <person name="Thomas K."/>
            <person name="Vaudin M."/>
            <person name="Vaughan K."/>
            <person name="Waterston R."/>
            <person name="Watson A."/>
            <person name="Weinstock L."/>
            <person name="Wilkinson-Sproat J."/>
            <person name="Wohldman P."/>
        </authorList>
    </citation>
    <scope>NUCLEOTIDE SEQUENCE [LARGE SCALE GENOMIC DNA]</scope>
    <source>
        <strain>Bristol N2</strain>
    </source>
</reference>
<reference key="2">
    <citation type="journal article" date="1998" name="Science">
        <title>Genome sequence of the nematode C. elegans: a platform for investigating biology.</title>
        <authorList>
            <consortium name="The C. elegans sequencing consortium"/>
        </authorList>
    </citation>
    <scope>NUCLEOTIDE SEQUENCE [LARGE SCALE GENOMIC DNA]</scope>
    <source>
        <strain>Bristol N2</strain>
    </source>
</reference>
<keyword id="KW-0238">DNA-binding</keyword>
<keyword id="KW-0472">Membrane</keyword>
<keyword id="KW-0539">Nucleus</keyword>
<keyword id="KW-1185">Reference proteome</keyword>
<keyword id="KW-0677">Repeat</keyword>
<keyword id="KW-0732">Signal</keyword>
<keyword id="KW-0812">Transmembrane</keyword>
<keyword id="KW-1133">Transmembrane helix</keyword>
<feature type="signal peptide" evidence="1">
    <location>
        <begin position="1"/>
        <end position="16"/>
    </location>
</feature>
<feature type="chain" id="PRO_0000415375" description="Uncharacterized protein F54F2.9">
    <location>
        <begin position="17"/>
        <end position="414"/>
    </location>
</feature>
<feature type="transmembrane region" description="Helical" evidence="1">
    <location>
        <begin position="125"/>
        <end position="145"/>
    </location>
</feature>
<feature type="domain" description="Myb-like 1" evidence="2">
    <location>
        <begin position="20"/>
        <end position="59"/>
    </location>
</feature>
<feature type="domain" description="J" evidence="3">
    <location>
        <begin position="35"/>
        <end position="99"/>
    </location>
</feature>
<feature type="domain" description="Myb-like 2" evidence="2">
    <location>
        <begin position="274"/>
        <end position="320"/>
    </location>
</feature>
<feature type="domain" description="SANT" evidence="4">
    <location>
        <begin position="352"/>
        <end position="407"/>
    </location>
</feature>
<feature type="region of interest" description="Disordered" evidence="5">
    <location>
        <begin position="211"/>
        <end position="234"/>
    </location>
</feature>
<feature type="compositionally biased region" description="Acidic residues" evidence="5">
    <location>
        <begin position="217"/>
        <end position="226"/>
    </location>
</feature>